<comment type="function">
    <text evidence="1">Catalyzes the specific phosphorylation of the 3-hydroxyl group of shikimic acid using ATP as a cosubstrate.</text>
</comment>
<comment type="catalytic activity">
    <reaction evidence="1">
        <text>shikimate + ATP = 3-phosphoshikimate + ADP + H(+)</text>
        <dbReference type="Rhea" id="RHEA:13121"/>
        <dbReference type="ChEBI" id="CHEBI:15378"/>
        <dbReference type="ChEBI" id="CHEBI:30616"/>
        <dbReference type="ChEBI" id="CHEBI:36208"/>
        <dbReference type="ChEBI" id="CHEBI:145989"/>
        <dbReference type="ChEBI" id="CHEBI:456216"/>
        <dbReference type="EC" id="2.7.1.71"/>
    </reaction>
</comment>
<comment type="cofactor">
    <cofactor evidence="1">
        <name>Mg(2+)</name>
        <dbReference type="ChEBI" id="CHEBI:18420"/>
    </cofactor>
    <text evidence="1">Binds 1 Mg(2+) ion per subunit.</text>
</comment>
<comment type="pathway">
    <text evidence="1">Metabolic intermediate biosynthesis; chorismate biosynthesis; chorismate from D-erythrose 4-phosphate and phosphoenolpyruvate: step 5/7.</text>
</comment>
<comment type="subunit">
    <text evidence="1">Monomer.</text>
</comment>
<comment type="subcellular location">
    <subcellularLocation>
        <location evidence="1">Cytoplasm</location>
    </subcellularLocation>
</comment>
<comment type="similarity">
    <text evidence="1">Belongs to the shikimate kinase family.</text>
</comment>
<accession>Q5KY95</accession>
<evidence type="ECO:0000255" key="1">
    <source>
        <dbReference type="HAMAP-Rule" id="MF_00109"/>
    </source>
</evidence>
<feature type="chain" id="PRO_0000237882" description="Shikimate kinase">
    <location>
        <begin position="1"/>
        <end position="188"/>
    </location>
</feature>
<feature type="binding site" evidence="1">
    <location>
        <begin position="21"/>
        <end position="26"/>
    </location>
    <ligand>
        <name>ATP</name>
        <dbReference type="ChEBI" id="CHEBI:30616"/>
    </ligand>
</feature>
<feature type="binding site" evidence="1">
    <location>
        <position position="25"/>
    </location>
    <ligand>
        <name>Mg(2+)</name>
        <dbReference type="ChEBI" id="CHEBI:18420"/>
    </ligand>
</feature>
<feature type="binding site" evidence="1">
    <location>
        <position position="43"/>
    </location>
    <ligand>
        <name>substrate</name>
    </ligand>
</feature>
<feature type="binding site" evidence="1">
    <location>
        <position position="67"/>
    </location>
    <ligand>
        <name>substrate</name>
    </ligand>
</feature>
<feature type="binding site" evidence="1">
    <location>
        <position position="90"/>
    </location>
    <ligand>
        <name>substrate</name>
    </ligand>
</feature>
<feature type="binding site" evidence="1">
    <location>
        <position position="130"/>
    </location>
    <ligand>
        <name>ATP</name>
        <dbReference type="ChEBI" id="CHEBI:30616"/>
    </ligand>
</feature>
<feature type="binding site" evidence="1">
    <location>
        <position position="148"/>
    </location>
    <ligand>
        <name>substrate</name>
    </ligand>
</feature>
<protein>
    <recommendedName>
        <fullName evidence="1">Shikimate kinase</fullName>
        <shortName evidence="1">SK</shortName>
        <ecNumber evidence="1">2.7.1.71</ecNumber>
    </recommendedName>
</protein>
<name>AROK_GEOKA</name>
<reference key="1">
    <citation type="journal article" date="2004" name="Nucleic Acids Res.">
        <title>Thermoadaptation trait revealed by the genome sequence of thermophilic Geobacillus kaustophilus.</title>
        <authorList>
            <person name="Takami H."/>
            <person name="Takaki Y."/>
            <person name="Chee G.-J."/>
            <person name="Nishi S."/>
            <person name="Shimamura S."/>
            <person name="Suzuki H."/>
            <person name="Matsui S."/>
            <person name="Uchiyama I."/>
        </authorList>
    </citation>
    <scope>NUCLEOTIDE SEQUENCE [LARGE SCALE GENOMIC DNA]</scope>
    <source>
        <strain>HTA426</strain>
    </source>
</reference>
<sequence>MSRQTTIPLRERNIILIGFMGAGKTTIGQLVAKKLYRDFIDVDAEIERRQGMSIPELFAQKGEAYFRKVERELIVDLCTNTRLKILSLGGGAYLQEDVRRACLAHGIVFFLDLSWEHWKEERLPLIVDSRPVLKNKTLEEVEQLFFQRQSAYALHHSRVVLNELEAEQAAEQIVESIKWTWDVYEPNR</sequence>
<keyword id="KW-0028">Amino-acid biosynthesis</keyword>
<keyword id="KW-0057">Aromatic amino acid biosynthesis</keyword>
<keyword id="KW-0067">ATP-binding</keyword>
<keyword id="KW-0963">Cytoplasm</keyword>
<keyword id="KW-0418">Kinase</keyword>
<keyword id="KW-0460">Magnesium</keyword>
<keyword id="KW-0479">Metal-binding</keyword>
<keyword id="KW-0547">Nucleotide-binding</keyword>
<keyword id="KW-1185">Reference proteome</keyword>
<keyword id="KW-0808">Transferase</keyword>
<proteinExistence type="inferred from homology"/>
<dbReference type="EC" id="2.7.1.71" evidence="1"/>
<dbReference type="EMBL" id="BA000043">
    <property type="protein sequence ID" value="BAD76341.1"/>
    <property type="molecule type" value="Genomic_DNA"/>
</dbReference>
<dbReference type="RefSeq" id="WP_011231542.1">
    <property type="nucleotide sequence ID" value="NC_006510.1"/>
</dbReference>
<dbReference type="SMR" id="Q5KY95"/>
<dbReference type="STRING" id="235909.GK2056"/>
<dbReference type="KEGG" id="gka:GK2056"/>
<dbReference type="eggNOG" id="COG0703">
    <property type="taxonomic scope" value="Bacteria"/>
</dbReference>
<dbReference type="HOGENOM" id="CLU_057607_4_0_9"/>
<dbReference type="UniPathway" id="UPA00053">
    <property type="reaction ID" value="UER00088"/>
</dbReference>
<dbReference type="Proteomes" id="UP000001172">
    <property type="component" value="Chromosome"/>
</dbReference>
<dbReference type="GO" id="GO:0005829">
    <property type="term" value="C:cytosol"/>
    <property type="evidence" value="ECO:0007669"/>
    <property type="project" value="TreeGrafter"/>
</dbReference>
<dbReference type="GO" id="GO:0005524">
    <property type="term" value="F:ATP binding"/>
    <property type="evidence" value="ECO:0007669"/>
    <property type="project" value="UniProtKB-UniRule"/>
</dbReference>
<dbReference type="GO" id="GO:0000287">
    <property type="term" value="F:magnesium ion binding"/>
    <property type="evidence" value="ECO:0007669"/>
    <property type="project" value="UniProtKB-UniRule"/>
</dbReference>
<dbReference type="GO" id="GO:0004765">
    <property type="term" value="F:shikimate kinase activity"/>
    <property type="evidence" value="ECO:0007669"/>
    <property type="project" value="UniProtKB-UniRule"/>
</dbReference>
<dbReference type="GO" id="GO:0008652">
    <property type="term" value="P:amino acid biosynthetic process"/>
    <property type="evidence" value="ECO:0007669"/>
    <property type="project" value="UniProtKB-KW"/>
</dbReference>
<dbReference type="GO" id="GO:0009073">
    <property type="term" value="P:aromatic amino acid family biosynthetic process"/>
    <property type="evidence" value="ECO:0007669"/>
    <property type="project" value="UniProtKB-KW"/>
</dbReference>
<dbReference type="GO" id="GO:0009423">
    <property type="term" value="P:chorismate biosynthetic process"/>
    <property type="evidence" value="ECO:0007669"/>
    <property type="project" value="UniProtKB-UniRule"/>
</dbReference>
<dbReference type="CDD" id="cd00464">
    <property type="entry name" value="SK"/>
    <property type="match status" value="1"/>
</dbReference>
<dbReference type="Gene3D" id="3.40.50.300">
    <property type="entry name" value="P-loop containing nucleotide triphosphate hydrolases"/>
    <property type="match status" value="1"/>
</dbReference>
<dbReference type="HAMAP" id="MF_00109">
    <property type="entry name" value="Shikimate_kinase"/>
    <property type="match status" value="1"/>
</dbReference>
<dbReference type="InterPro" id="IPR027417">
    <property type="entry name" value="P-loop_NTPase"/>
</dbReference>
<dbReference type="InterPro" id="IPR031322">
    <property type="entry name" value="Shikimate/glucono_kinase"/>
</dbReference>
<dbReference type="InterPro" id="IPR000623">
    <property type="entry name" value="Shikimate_kinase/TSH1"/>
</dbReference>
<dbReference type="PANTHER" id="PTHR21087">
    <property type="entry name" value="SHIKIMATE KINASE"/>
    <property type="match status" value="1"/>
</dbReference>
<dbReference type="PANTHER" id="PTHR21087:SF16">
    <property type="entry name" value="SHIKIMATE KINASE 1, CHLOROPLASTIC"/>
    <property type="match status" value="1"/>
</dbReference>
<dbReference type="Pfam" id="PF01202">
    <property type="entry name" value="SKI"/>
    <property type="match status" value="1"/>
</dbReference>
<dbReference type="PRINTS" id="PR01100">
    <property type="entry name" value="SHIKIMTKNASE"/>
</dbReference>
<dbReference type="SUPFAM" id="SSF52540">
    <property type="entry name" value="P-loop containing nucleoside triphosphate hydrolases"/>
    <property type="match status" value="1"/>
</dbReference>
<gene>
    <name evidence="1" type="primary">aroK</name>
    <name type="synonym">aroI</name>
    <name type="ordered locus">GK2056</name>
</gene>
<organism>
    <name type="scientific">Geobacillus kaustophilus (strain HTA426)</name>
    <dbReference type="NCBI Taxonomy" id="235909"/>
    <lineage>
        <taxon>Bacteria</taxon>
        <taxon>Bacillati</taxon>
        <taxon>Bacillota</taxon>
        <taxon>Bacilli</taxon>
        <taxon>Bacillales</taxon>
        <taxon>Anoxybacillaceae</taxon>
        <taxon>Geobacillus</taxon>
        <taxon>Geobacillus thermoleovorans group</taxon>
    </lineage>
</organism>